<evidence type="ECO:0000255" key="1">
    <source>
        <dbReference type="PROSITE-ProRule" id="PRU00133"/>
    </source>
</evidence>
<evidence type="ECO:0000255" key="2">
    <source>
        <dbReference type="PROSITE-ProRule" id="PRU00625"/>
    </source>
</evidence>
<evidence type="ECO:0000256" key="3">
    <source>
        <dbReference type="SAM" id="MobiDB-lite"/>
    </source>
</evidence>
<sequence>MTESLIMNNISKYNISPQFNSDRIYNDPSLMDDEFSDNEYDLSPKDDVPSPSKRGRGQIQNGIRRSPNKWTEEEDQKLFQLVSIYGEKKWKRISAEMGGQKTGAQCAQHWKRVLSPDIRKGPWDEDEEELLLRLVNQHGSSWKKIAKRICKRTDIQCRYQYLKSLQSREVAWVPKEDEVLVKKVDEMGENLSWLEVSEYLAKLKHTNTLRTALECKTRYLQLTGKGGSILPPLNQSNVSSLNSSSANTFNQQLQYQQQQQQQQQQQQQQQQQQQQQMNNNYNNNYNNNNNNINNNYNNNHNNQNNNNNNNHNHYNNHYNQMNNNNNNNHYNNNNNNNNNINNNNNNNMYQMNNNNSNSNNNNKSHNLSPLSSIIDSNTSSPSFEGCEDNNNNNNNNNNNNNNNNNNNNNNNNSNNTPPNIFRPLPHKPVVTGLTSPTSSPIPSSPPLTPPTSLTLPSSTLSSPSCNNSIRQPSPSPSIKTFKSTIVSTPSRPSPSSSTNSAFSINNIIDSENNNNNNNNDNDNIKVEDNGCNEPVMKKVRSNGEFYYQPIKNKLNNNNNNNNNNNNNNNNNNNNNNNNNNNNGNNTLSYNSDNSSDDDMLPKLKNNKQILSNFKNHNNNQSNTSPMSSPISSPHQSSIEKLKATSFDFFKLESLATLASQSQIVNELVN</sequence>
<gene>
    <name type="primary">mybM</name>
    <name type="ORF">DDB_G0267636</name>
</gene>
<keyword id="KW-0238">DNA-binding</keyword>
<keyword id="KW-0539">Nucleus</keyword>
<keyword id="KW-1185">Reference proteome</keyword>
<keyword id="KW-0677">Repeat</keyword>
<keyword id="KW-0804">Transcription</keyword>
<keyword id="KW-0805">Transcription regulation</keyword>
<comment type="subcellular location">
    <subcellularLocation>
        <location evidence="2">Nucleus</location>
    </subcellularLocation>
</comment>
<organism>
    <name type="scientific">Dictyostelium discoideum</name>
    <name type="common">Social amoeba</name>
    <dbReference type="NCBI Taxonomy" id="44689"/>
    <lineage>
        <taxon>Eukaryota</taxon>
        <taxon>Amoebozoa</taxon>
        <taxon>Evosea</taxon>
        <taxon>Eumycetozoa</taxon>
        <taxon>Dictyostelia</taxon>
        <taxon>Dictyosteliales</taxon>
        <taxon>Dictyosteliaceae</taxon>
        <taxon>Dictyostelium</taxon>
    </lineage>
</organism>
<name>MYBM_DICDI</name>
<feature type="chain" id="PRO_0000328227" description="Myb-like protein M">
    <location>
        <begin position="1"/>
        <end position="669"/>
    </location>
</feature>
<feature type="domain" description="HTH myb-type 1" evidence="2">
    <location>
        <begin position="60"/>
        <end position="118"/>
    </location>
</feature>
<feature type="domain" description="HTH myb-type 2" evidence="2">
    <location>
        <begin position="119"/>
        <end position="170"/>
    </location>
</feature>
<feature type="domain" description="Myb-like" evidence="1">
    <location>
        <begin position="172"/>
        <end position="223"/>
    </location>
</feature>
<feature type="DNA-binding region" description="H-T-H motif" evidence="2">
    <location>
        <begin position="90"/>
        <end position="114"/>
    </location>
</feature>
<feature type="DNA-binding region" description="H-T-H motif" evidence="2">
    <location>
        <begin position="142"/>
        <end position="166"/>
    </location>
</feature>
<feature type="region of interest" description="Disordered" evidence="3">
    <location>
        <begin position="27"/>
        <end position="69"/>
    </location>
</feature>
<feature type="region of interest" description="Disordered" evidence="3">
    <location>
        <begin position="226"/>
        <end position="530"/>
    </location>
</feature>
<feature type="region of interest" description="Disordered" evidence="3">
    <location>
        <begin position="550"/>
        <end position="636"/>
    </location>
</feature>
<feature type="compositionally biased region" description="Acidic residues" evidence="3">
    <location>
        <begin position="30"/>
        <end position="40"/>
    </location>
</feature>
<feature type="compositionally biased region" description="Low complexity" evidence="3">
    <location>
        <begin position="234"/>
        <end position="382"/>
    </location>
</feature>
<feature type="compositionally biased region" description="Low complexity" evidence="3">
    <location>
        <begin position="389"/>
        <end position="415"/>
    </location>
</feature>
<feature type="compositionally biased region" description="Low complexity" evidence="3">
    <location>
        <begin position="450"/>
        <end position="464"/>
    </location>
</feature>
<feature type="compositionally biased region" description="Polar residues" evidence="3">
    <location>
        <begin position="465"/>
        <end position="482"/>
    </location>
</feature>
<feature type="compositionally biased region" description="Low complexity" evidence="3">
    <location>
        <begin position="483"/>
        <end position="521"/>
    </location>
</feature>
<feature type="compositionally biased region" description="Low complexity" evidence="3">
    <location>
        <begin position="555"/>
        <end position="593"/>
    </location>
</feature>
<feature type="compositionally biased region" description="Low complexity" evidence="3">
    <location>
        <begin position="611"/>
        <end position="636"/>
    </location>
</feature>
<accession>Q55GK3</accession>
<proteinExistence type="inferred from homology"/>
<dbReference type="EMBL" id="AAFI02000003">
    <property type="protein sequence ID" value="EAL73271.1"/>
    <property type="molecule type" value="Genomic_DNA"/>
</dbReference>
<dbReference type="RefSeq" id="XP_647181.1">
    <property type="nucleotide sequence ID" value="XM_642089.1"/>
</dbReference>
<dbReference type="SMR" id="Q55GK3"/>
<dbReference type="FunCoup" id="Q55GK3">
    <property type="interactions" value="367"/>
</dbReference>
<dbReference type="STRING" id="44689.Q55GK3"/>
<dbReference type="PaxDb" id="44689-DDB0220517"/>
<dbReference type="EnsemblProtists" id="EAL73271">
    <property type="protein sequence ID" value="EAL73271"/>
    <property type="gene ID" value="DDB_G0267636"/>
</dbReference>
<dbReference type="GeneID" id="8615985"/>
<dbReference type="KEGG" id="ddi:DDB_G0267636"/>
<dbReference type="dictyBase" id="DDB_G0267636">
    <property type="gene designation" value="mybM"/>
</dbReference>
<dbReference type="VEuPathDB" id="AmoebaDB:DDB_G0267636"/>
<dbReference type="eggNOG" id="KOG0048">
    <property type="taxonomic scope" value="Eukaryota"/>
</dbReference>
<dbReference type="HOGENOM" id="CLU_410746_0_0_1"/>
<dbReference type="InParanoid" id="Q55GK3"/>
<dbReference type="OMA" id="PEQNINH"/>
<dbReference type="PRO" id="PR:Q55GK3"/>
<dbReference type="Proteomes" id="UP000002195">
    <property type="component" value="Chromosome 1"/>
</dbReference>
<dbReference type="GO" id="GO:0005634">
    <property type="term" value="C:nucleus"/>
    <property type="evidence" value="ECO:0007669"/>
    <property type="project" value="UniProtKB-SubCell"/>
</dbReference>
<dbReference type="GO" id="GO:0003677">
    <property type="term" value="F:DNA binding"/>
    <property type="evidence" value="ECO:0007669"/>
    <property type="project" value="UniProtKB-KW"/>
</dbReference>
<dbReference type="CDD" id="cd00167">
    <property type="entry name" value="SANT"/>
    <property type="match status" value="2"/>
</dbReference>
<dbReference type="Gene3D" id="1.10.10.60">
    <property type="entry name" value="Homeodomain-like"/>
    <property type="match status" value="3"/>
</dbReference>
<dbReference type="InterPro" id="IPR009057">
    <property type="entry name" value="Homeodomain-like_sf"/>
</dbReference>
<dbReference type="InterPro" id="IPR051575">
    <property type="entry name" value="Myb-like_DNA-bd"/>
</dbReference>
<dbReference type="InterPro" id="IPR017930">
    <property type="entry name" value="Myb_dom"/>
</dbReference>
<dbReference type="InterPro" id="IPR001005">
    <property type="entry name" value="SANT/Myb"/>
</dbReference>
<dbReference type="PANTHER" id="PTHR46621">
    <property type="entry name" value="SNRNA-ACTIVATING PROTEIN COMPLEX SUBUNIT 4"/>
    <property type="match status" value="1"/>
</dbReference>
<dbReference type="PANTHER" id="PTHR46621:SF1">
    <property type="entry name" value="SNRNA-ACTIVATING PROTEIN COMPLEX SUBUNIT 4"/>
    <property type="match status" value="1"/>
</dbReference>
<dbReference type="Pfam" id="PF13921">
    <property type="entry name" value="Myb_DNA-bind_6"/>
    <property type="match status" value="1"/>
</dbReference>
<dbReference type="SMART" id="SM00717">
    <property type="entry name" value="SANT"/>
    <property type="match status" value="3"/>
</dbReference>
<dbReference type="SUPFAM" id="SSF46689">
    <property type="entry name" value="Homeodomain-like"/>
    <property type="match status" value="1"/>
</dbReference>
<dbReference type="PROSITE" id="PS51294">
    <property type="entry name" value="HTH_MYB"/>
    <property type="match status" value="2"/>
</dbReference>
<dbReference type="PROSITE" id="PS50090">
    <property type="entry name" value="MYB_LIKE"/>
    <property type="match status" value="1"/>
</dbReference>
<protein>
    <recommendedName>
        <fullName>Myb-like protein M</fullName>
    </recommendedName>
</protein>
<reference key="1">
    <citation type="journal article" date="2005" name="Nature">
        <title>The genome of the social amoeba Dictyostelium discoideum.</title>
        <authorList>
            <person name="Eichinger L."/>
            <person name="Pachebat J.A."/>
            <person name="Gloeckner G."/>
            <person name="Rajandream M.A."/>
            <person name="Sucgang R."/>
            <person name="Berriman M."/>
            <person name="Song J."/>
            <person name="Olsen R."/>
            <person name="Szafranski K."/>
            <person name="Xu Q."/>
            <person name="Tunggal B."/>
            <person name="Kummerfeld S."/>
            <person name="Madera M."/>
            <person name="Konfortov B.A."/>
            <person name="Rivero F."/>
            <person name="Bankier A.T."/>
            <person name="Lehmann R."/>
            <person name="Hamlin N."/>
            <person name="Davies R."/>
            <person name="Gaudet P."/>
            <person name="Fey P."/>
            <person name="Pilcher K."/>
            <person name="Chen G."/>
            <person name="Saunders D."/>
            <person name="Sodergren E.J."/>
            <person name="Davis P."/>
            <person name="Kerhornou A."/>
            <person name="Nie X."/>
            <person name="Hall N."/>
            <person name="Anjard C."/>
            <person name="Hemphill L."/>
            <person name="Bason N."/>
            <person name="Farbrother P."/>
            <person name="Desany B."/>
            <person name="Just E."/>
            <person name="Morio T."/>
            <person name="Rost R."/>
            <person name="Churcher C.M."/>
            <person name="Cooper J."/>
            <person name="Haydock S."/>
            <person name="van Driessche N."/>
            <person name="Cronin A."/>
            <person name="Goodhead I."/>
            <person name="Muzny D.M."/>
            <person name="Mourier T."/>
            <person name="Pain A."/>
            <person name="Lu M."/>
            <person name="Harper D."/>
            <person name="Lindsay R."/>
            <person name="Hauser H."/>
            <person name="James K.D."/>
            <person name="Quiles M."/>
            <person name="Madan Babu M."/>
            <person name="Saito T."/>
            <person name="Buchrieser C."/>
            <person name="Wardroper A."/>
            <person name="Felder M."/>
            <person name="Thangavelu M."/>
            <person name="Johnson D."/>
            <person name="Knights A."/>
            <person name="Loulseged H."/>
            <person name="Mungall K.L."/>
            <person name="Oliver K."/>
            <person name="Price C."/>
            <person name="Quail M.A."/>
            <person name="Urushihara H."/>
            <person name="Hernandez J."/>
            <person name="Rabbinowitsch E."/>
            <person name="Steffen D."/>
            <person name="Sanders M."/>
            <person name="Ma J."/>
            <person name="Kohara Y."/>
            <person name="Sharp S."/>
            <person name="Simmonds M.N."/>
            <person name="Spiegler S."/>
            <person name="Tivey A."/>
            <person name="Sugano S."/>
            <person name="White B."/>
            <person name="Walker D."/>
            <person name="Woodward J.R."/>
            <person name="Winckler T."/>
            <person name="Tanaka Y."/>
            <person name="Shaulsky G."/>
            <person name="Schleicher M."/>
            <person name="Weinstock G.M."/>
            <person name="Rosenthal A."/>
            <person name="Cox E.C."/>
            <person name="Chisholm R.L."/>
            <person name="Gibbs R.A."/>
            <person name="Loomis W.F."/>
            <person name="Platzer M."/>
            <person name="Kay R.R."/>
            <person name="Williams J.G."/>
            <person name="Dear P.H."/>
            <person name="Noegel A.A."/>
            <person name="Barrell B.G."/>
            <person name="Kuspa A."/>
        </authorList>
    </citation>
    <scope>NUCLEOTIDE SEQUENCE [LARGE SCALE GENOMIC DNA]</scope>
    <source>
        <strain>AX4</strain>
    </source>
</reference>